<organism>
    <name type="scientific">Bordetella avium (strain 197N)</name>
    <dbReference type="NCBI Taxonomy" id="360910"/>
    <lineage>
        <taxon>Bacteria</taxon>
        <taxon>Pseudomonadati</taxon>
        <taxon>Pseudomonadota</taxon>
        <taxon>Betaproteobacteria</taxon>
        <taxon>Burkholderiales</taxon>
        <taxon>Alcaligenaceae</taxon>
        <taxon>Bordetella</taxon>
    </lineage>
</organism>
<proteinExistence type="inferred from homology"/>
<feature type="chain" id="PRO_1000056222" description="Ubiquinone/menaquinone biosynthesis C-methyltransferase UbiE">
    <location>
        <begin position="1"/>
        <end position="256"/>
    </location>
</feature>
<feature type="region of interest" description="Disordered" evidence="2">
    <location>
        <begin position="1"/>
        <end position="24"/>
    </location>
</feature>
<feature type="compositionally biased region" description="Polar residues" evidence="2">
    <location>
        <begin position="1"/>
        <end position="19"/>
    </location>
</feature>
<feature type="binding site" evidence="1">
    <location>
        <position position="81"/>
    </location>
    <ligand>
        <name>S-adenosyl-L-methionine</name>
        <dbReference type="ChEBI" id="CHEBI:59789"/>
    </ligand>
</feature>
<feature type="binding site" evidence="1">
    <location>
        <position position="102"/>
    </location>
    <ligand>
        <name>S-adenosyl-L-methionine</name>
        <dbReference type="ChEBI" id="CHEBI:59789"/>
    </ligand>
</feature>
<feature type="binding site" evidence="1">
    <location>
        <begin position="128"/>
        <end position="129"/>
    </location>
    <ligand>
        <name>S-adenosyl-L-methionine</name>
        <dbReference type="ChEBI" id="CHEBI:59789"/>
    </ligand>
</feature>
<comment type="function">
    <text evidence="1">Methyltransferase required for the conversion of demethylmenaquinol (DMKH2) to menaquinol (MKH2) and the conversion of 2-polyprenyl-6-methoxy-1,4-benzoquinol (DDMQH2) to 2-polyprenyl-3-methyl-6-methoxy-1,4-benzoquinol (DMQH2).</text>
</comment>
<comment type="catalytic activity">
    <reaction evidence="1">
        <text>a 2-demethylmenaquinol + S-adenosyl-L-methionine = a menaquinol + S-adenosyl-L-homocysteine + H(+)</text>
        <dbReference type="Rhea" id="RHEA:42640"/>
        <dbReference type="Rhea" id="RHEA-COMP:9539"/>
        <dbReference type="Rhea" id="RHEA-COMP:9563"/>
        <dbReference type="ChEBI" id="CHEBI:15378"/>
        <dbReference type="ChEBI" id="CHEBI:18151"/>
        <dbReference type="ChEBI" id="CHEBI:55437"/>
        <dbReference type="ChEBI" id="CHEBI:57856"/>
        <dbReference type="ChEBI" id="CHEBI:59789"/>
        <dbReference type="EC" id="2.1.1.163"/>
    </reaction>
</comment>
<comment type="catalytic activity">
    <reaction evidence="1">
        <text>a 2-methoxy-6-(all-trans-polyprenyl)benzene-1,4-diol + S-adenosyl-L-methionine = a 5-methoxy-2-methyl-3-(all-trans-polyprenyl)benzene-1,4-diol + S-adenosyl-L-homocysteine + H(+)</text>
        <dbReference type="Rhea" id="RHEA:28286"/>
        <dbReference type="Rhea" id="RHEA-COMP:10858"/>
        <dbReference type="Rhea" id="RHEA-COMP:10859"/>
        <dbReference type="ChEBI" id="CHEBI:15378"/>
        <dbReference type="ChEBI" id="CHEBI:57856"/>
        <dbReference type="ChEBI" id="CHEBI:59789"/>
        <dbReference type="ChEBI" id="CHEBI:84166"/>
        <dbReference type="ChEBI" id="CHEBI:84167"/>
        <dbReference type="EC" id="2.1.1.201"/>
    </reaction>
</comment>
<comment type="pathway">
    <text evidence="1">Quinol/quinone metabolism; menaquinone biosynthesis; menaquinol from 1,4-dihydroxy-2-naphthoate: step 2/2.</text>
</comment>
<comment type="pathway">
    <text evidence="1">Cofactor biosynthesis; ubiquinone biosynthesis.</text>
</comment>
<comment type="similarity">
    <text evidence="1">Belongs to the class I-like SAM-binding methyltransferase superfamily. MenG/UbiE family.</text>
</comment>
<dbReference type="EC" id="2.1.1.163" evidence="1"/>
<dbReference type="EC" id="2.1.1.201" evidence="1"/>
<dbReference type="EMBL" id="AM167904">
    <property type="protein sequence ID" value="CAJ50699.1"/>
    <property type="molecule type" value="Genomic_DNA"/>
</dbReference>
<dbReference type="RefSeq" id="WP_012418727.1">
    <property type="nucleotide sequence ID" value="NC_010645.1"/>
</dbReference>
<dbReference type="SMR" id="Q2KUG1"/>
<dbReference type="STRING" id="360910.BAV3089"/>
<dbReference type="GeneID" id="92933653"/>
<dbReference type="KEGG" id="bav:BAV3089"/>
<dbReference type="eggNOG" id="COG2226">
    <property type="taxonomic scope" value="Bacteria"/>
</dbReference>
<dbReference type="HOGENOM" id="CLU_037990_0_0_4"/>
<dbReference type="OrthoDB" id="9808140at2"/>
<dbReference type="UniPathway" id="UPA00079">
    <property type="reaction ID" value="UER00169"/>
</dbReference>
<dbReference type="UniPathway" id="UPA00232"/>
<dbReference type="Proteomes" id="UP000001977">
    <property type="component" value="Chromosome"/>
</dbReference>
<dbReference type="GO" id="GO:0008425">
    <property type="term" value="F:2-methoxy-6-polyprenyl-1,4-benzoquinol methyltransferase activity"/>
    <property type="evidence" value="ECO:0007669"/>
    <property type="project" value="UniProtKB-UniRule"/>
</dbReference>
<dbReference type="GO" id="GO:0043770">
    <property type="term" value="F:demethylmenaquinone methyltransferase activity"/>
    <property type="evidence" value="ECO:0007669"/>
    <property type="project" value="UniProtKB-UniRule"/>
</dbReference>
<dbReference type="GO" id="GO:0009060">
    <property type="term" value="P:aerobic respiration"/>
    <property type="evidence" value="ECO:0007669"/>
    <property type="project" value="UniProtKB-UniRule"/>
</dbReference>
<dbReference type="GO" id="GO:0009234">
    <property type="term" value="P:menaquinone biosynthetic process"/>
    <property type="evidence" value="ECO:0007669"/>
    <property type="project" value="UniProtKB-UniRule"/>
</dbReference>
<dbReference type="GO" id="GO:0032259">
    <property type="term" value="P:methylation"/>
    <property type="evidence" value="ECO:0007669"/>
    <property type="project" value="UniProtKB-KW"/>
</dbReference>
<dbReference type="CDD" id="cd02440">
    <property type="entry name" value="AdoMet_MTases"/>
    <property type="match status" value="1"/>
</dbReference>
<dbReference type="Gene3D" id="3.40.50.150">
    <property type="entry name" value="Vaccinia Virus protein VP39"/>
    <property type="match status" value="1"/>
</dbReference>
<dbReference type="HAMAP" id="MF_01813">
    <property type="entry name" value="MenG_UbiE_methyltr"/>
    <property type="match status" value="1"/>
</dbReference>
<dbReference type="InterPro" id="IPR029063">
    <property type="entry name" value="SAM-dependent_MTases_sf"/>
</dbReference>
<dbReference type="InterPro" id="IPR004033">
    <property type="entry name" value="UbiE/COQ5_MeTrFase"/>
</dbReference>
<dbReference type="InterPro" id="IPR023576">
    <property type="entry name" value="UbiE/COQ5_MeTrFase_CS"/>
</dbReference>
<dbReference type="NCBIfam" id="TIGR01934">
    <property type="entry name" value="MenG_MenH_UbiE"/>
    <property type="match status" value="1"/>
</dbReference>
<dbReference type="NCBIfam" id="NF001240">
    <property type="entry name" value="PRK00216.1-1"/>
    <property type="match status" value="1"/>
</dbReference>
<dbReference type="PANTHER" id="PTHR43591:SF24">
    <property type="entry name" value="2-METHOXY-6-POLYPRENYL-1,4-BENZOQUINOL METHYLASE, MITOCHONDRIAL"/>
    <property type="match status" value="1"/>
</dbReference>
<dbReference type="PANTHER" id="PTHR43591">
    <property type="entry name" value="METHYLTRANSFERASE"/>
    <property type="match status" value="1"/>
</dbReference>
<dbReference type="Pfam" id="PF01209">
    <property type="entry name" value="Ubie_methyltran"/>
    <property type="match status" value="1"/>
</dbReference>
<dbReference type="SUPFAM" id="SSF53335">
    <property type="entry name" value="S-adenosyl-L-methionine-dependent methyltransferases"/>
    <property type="match status" value="1"/>
</dbReference>
<dbReference type="PROSITE" id="PS51608">
    <property type="entry name" value="SAM_MT_UBIE"/>
    <property type="match status" value="1"/>
</dbReference>
<dbReference type="PROSITE" id="PS01183">
    <property type="entry name" value="UBIE_1"/>
    <property type="match status" value="1"/>
</dbReference>
<dbReference type="PROSITE" id="PS01184">
    <property type="entry name" value="UBIE_2"/>
    <property type="match status" value="1"/>
</dbReference>
<gene>
    <name evidence="1" type="primary">ubiE</name>
    <name type="ordered locus">BAV3089</name>
</gene>
<protein>
    <recommendedName>
        <fullName evidence="1">Ubiquinone/menaquinone biosynthesis C-methyltransferase UbiE</fullName>
        <ecNumber evidence="1">2.1.1.163</ecNumber>
        <ecNumber evidence="1">2.1.1.201</ecNumber>
    </recommendedName>
    <alternativeName>
        <fullName evidence="1">2-methoxy-6-polyprenyl-1,4-benzoquinol methylase</fullName>
    </alternativeName>
    <alternativeName>
        <fullName evidence="1">Demethylmenaquinone methyltransferase</fullName>
    </alternativeName>
</protein>
<keyword id="KW-0474">Menaquinone biosynthesis</keyword>
<keyword id="KW-0489">Methyltransferase</keyword>
<keyword id="KW-1185">Reference proteome</keyword>
<keyword id="KW-0949">S-adenosyl-L-methionine</keyword>
<keyword id="KW-0808">Transferase</keyword>
<keyword id="KW-0831">Ubiquinone biosynthesis</keyword>
<reference key="1">
    <citation type="journal article" date="2006" name="J. Bacteriol.">
        <title>Comparison of the genome sequence of the poultry pathogen Bordetella avium with those of B. bronchiseptica, B. pertussis, and B. parapertussis reveals extensive diversity in surface structures associated with host interaction.</title>
        <authorList>
            <person name="Sebaihia M."/>
            <person name="Preston A."/>
            <person name="Maskell D.J."/>
            <person name="Kuzmiak H."/>
            <person name="Connell T.D."/>
            <person name="King N.D."/>
            <person name="Orndorff P.E."/>
            <person name="Miyamoto D.M."/>
            <person name="Thomson N.R."/>
            <person name="Harris D."/>
            <person name="Goble A."/>
            <person name="Lord A."/>
            <person name="Murphy L."/>
            <person name="Quail M.A."/>
            <person name="Rutter S."/>
            <person name="Squares R."/>
            <person name="Squares S."/>
            <person name="Woodward J."/>
            <person name="Parkhill J."/>
            <person name="Temple L.M."/>
        </authorList>
    </citation>
    <scope>NUCLEOTIDE SEQUENCE [LARGE SCALE GENOMIC DNA]</scope>
    <source>
        <strain>197N</strain>
    </source>
</reference>
<name>UBIE_BORA1</name>
<accession>Q2KUG1</accession>
<sequence length="256" mass="28198">MQNRSSSPDSSSAGNTHFGFQSVPEGDKANKVAEVFHSVAARYDVMNDLMSAGLHRVWKAFTIGRANVRPGMKVLDIAGGTGDLARAFAKRAGPSGEVWLTDINDSMLRVGRDRLTDGGLILPLAVCDAEKLPFPDQYFDRVSVAFGLRNMTHKDRALAEMRRVLKPGGKLLVLEFSRVAKPLAPAYDWYSFNVLPWLGKKVANDEASYRYLAESIRMHPDQDTLADMMRAVGLDRVQYFNLTAGVAALHEGVRLG</sequence>
<evidence type="ECO:0000255" key="1">
    <source>
        <dbReference type="HAMAP-Rule" id="MF_01813"/>
    </source>
</evidence>
<evidence type="ECO:0000256" key="2">
    <source>
        <dbReference type="SAM" id="MobiDB-lite"/>
    </source>
</evidence>